<organism>
    <name type="scientific">Methylocella silvestris (strain DSM 15510 / CIP 108128 / LMG 27833 / NCIMB 13906 / BL2)</name>
    <dbReference type="NCBI Taxonomy" id="395965"/>
    <lineage>
        <taxon>Bacteria</taxon>
        <taxon>Pseudomonadati</taxon>
        <taxon>Pseudomonadota</taxon>
        <taxon>Alphaproteobacteria</taxon>
        <taxon>Hyphomicrobiales</taxon>
        <taxon>Beijerinckiaceae</taxon>
        <taxon>Methylocella</taxon>
    </lineage>
</organism>
<protein>
    <recommendedName>
        <fullName evidence="1">Shikimate dehydrogenase (NADP(+))</fullName>
        <shortName evidence="1">SDH</shortName>
        <ecNumber evidence="1">1.1.1.25</ecNumber>
    </recommendedName>
</protein>
<proteinExistence type="inferred from homology"/>
<dbReference type="EC" id="1.1.1.25" evidence="1"/>
<dbReference type="EMBL" id="CP001280">
    <property type="protein sequence ID" value="ACK51461.1"/>
    <property type="molecule type" value="Genomic_DNA"/>
</dbReference>
<dbReference type="RefSeq" id="WP_012591530.1">
    <property type="nucleotide sequence ID" value="NC_011666.1"/>
</dbReference>
<dbReference type="SMR" id="B8EM72"/>
<dbReference type="STRING" id="395965.Msil_2537"/>
<dbReference type="KEGG" id="msl:Msil_2537"/>
<dbReference type="eggNOG" id="COG0169">
    <property type="taxonomic scope" value="Bacteria"/>
</dbReference>
<dbReference type="HOGENOM" id="CLU_044063_2_0_5"/>
<dbReference type="OrthoDB" id="9792692at2"/>
<dbReference type="UniPathway" id="UPA00053">
    <property type="reaction ID" value="UER00087"/>
</dbReference>
<dbReference type="Proteomes" id="UP000002257">
    <property type="component" value="Chromosome"/>
</dbReference>
<dbReference type="GO" id="GO:0005829">
    <property type="term" value="C:cytosol"/>
    <property type="evidence" value="ECO:0007669"/>
    <property type="project" value="TreeGrafter"/>
</dbReference>
<dbReference type="GO" id="GO:0050661">
    <property type="term" value="F:NADP binding"/>
    <property type="evidence" value="ECO:0007669"/>
    <property type="project" value="InterPro"/>
</dbReference>
<dbReference type="GO" id="GO:0004764">
    <property type="term" value="F:shikimate 3-dehydrogenase (NADP+) activity"/>
    <property type="evidence" value="ECO:0007669"/>
    <property type="project" value="UniProtKB-UniRule"/>
</dbReference>
<dbReference type="GO" id="GO:0008652">
    <property type="term" value="P:amino acid biosynthetic process"/>
    <property type="evidence" value="ECO:0007669"/>
    <property type="project" value="UniProtKB-KW"/>
</dbReference>
<dbReference type="GO" id="GO:0009073">
    <property type="term" value="P:aromatic amino acid family biosynthetic process"/>
    <property type="evidence" value="ECO:0007669"/>
    <property type="project" value="UniProtKB-KW"/>
</dbReference>
<dbReference type="GO" id="GO:0009423">
    <property type="term" value="P:chorismate biosynthetic process"/>
    <property type="evidence" value="ECO:0007669"/>
    <property type="project" value="UniProtKB-UniRule"/>
</dbReference>
<dbReference type="GO" id="GO:0019632">
    <property type="term" value="P:shikimate metabolic process"/>
    <property type="evidence" value="ECO:0007669"/>
    <property type="project" value="InterPro"/>
</dbReference>
<dbReference type="CDD" id="cd01065">
    <property type="entry name" value="NAD_bind_Shikimate_DH"/>
    <property type="match status" value="1"/>
</dbReference>
<dbReference type="FunFam" id="3.40.50.10860:FF:000006">
    <property type="entry name" value="Shikimate dehydrogenase (NADP(+))"/>
    <property type="match status" value="1"/>
</dbReference>
<dbReference type="Gene3D" id="3.40.50.10860">
    <property type="entry name" value="Leucine Dehydrogenase, chain A, domain 1"/>
    <property type="match status" value="1"/>
</dbReference>
<dbReference type="Gene3D" id="3.40.50.720">
    <property type="entry name" value="NAD(P)-binding Rossmann-like Domain"/>
    <property type="match status" value="1"/>
</dbReference>
<dbReference type="HAMAP" id="MF_00222">
    <property type="entry name" value="Shikimate_DH_AroE"/>
    <property type="match status" value="1"/>
</dbReference>
<dbReference type="InterPro" id="IPR046346">
    <property type="entry name" value="Aminoacid_DH-like_N_sf"/>
</dbReference>
<dbReference type="InterPro" id="IPR036291">
    <property type="entry name" value="NAD(P)-bd_dom_sf"/>
</dbReference>
<dbReference type="InterPro" id="IPR011342">
    <property type="entry name" value="Shikimate_DH"/>
</dbReference>
<dbReference type="InterPro" id="IPR013708">
    <property type="entry name" value="Shikimate_DH-bd_N"/>
</dbReference>
<dbReference type="InterPro" id="IPR022893">
    <property type="entry name" value="Shikimate_DH_fam"/>
</dbReference>
<dbReference type="InterPro" id="IPR006151">
    <property type="entry name" value="Shikm_DH/Glu-tRNA_Rdtase"/>
</dbReference>
<dbReference type="NCBIfam" id="TIGR00507">
    <property type="entry name" value="aroE"/>
    <property type="match status" value="1"/>
</dbReference>
<dbReference type="NCBIfam" id="NF001312">
    <property type="entry name" value="PRK00258.1-4"/>
    <property type="match status" value="1"/>
</dbReference>
<dbReference type="PANTHER" id="PTHR21089:SF1">
    <property type="entry name" value="BIFUNCTIONAL 3-DEHYDROQUINATE DEHYDRATASE_SHIKIMATE DEHYDROGENASE, CHLOROPLASTIC"/>
    <property type="match status" value="1"/>
</dbReference>
<dbReference type="PANTHER" id="PTHR21089">
    <property type="entry name" value="SHIKIMATE DEHYDROGENASE"/>
    <property type="match status" value="1"/>
</dbReference>
<dbReference type="Pfam" id="PF01488">
    <property type="entry name" value="Shikimate_DH"/>
    <property type="match status" value="1"/>
</dbReference>
<dbReference type="Pfam" id="PF08501">
    <property type="entry name" value="Shikimate_dh_N"/>
    <property type="match status" value="1"/>
</dbReference>
<dbReference type="SUPFAM" id="SSF53223">
    <property type="entry name" value="Aminoacid dehydrogenase-like, N-terminal domain"/>
    <property type="match status" value="1"/>
</dbReference>
<dbReference type="SUPFAM" id="SSF51735">
    <property type="entry name" value="NAD(P)-binding Rossmann-fold domains"/>
    <property type="match status" value="1"/>
</dbReference>
<feature type="chain" id="PRO_1000124891" description="Shikimate dehydrogenase (NADP(+))">
    <location>
        <begin position="1"/>
        <end position="280"/>
    </location>
</feature>
<feature type="active site" description="Proton acceptor" evidence="1">
    <location>
        <position position="69"/>
    </location>
</feature>
<feature type="binding site" evidence="1">
    <location>
        <begin position="18"/>
        <end position="20"/>
    </location>
    <ligand>
        <name>shikimate</name>
        <dbReference type="ChEBI" id="CHEBI:36208"/>
    </ligand>
</feature>
<feature type="binding site" evidence="1">
    <location>
        <position position="65"/>
    </location>
    <ligand>
        <name>shikimate</name>
        <dbReference type="ChEBI" id="CHEBI:36208"/>
    </ligand>
</feature>
<feature type="binding site" evidence="1">
    <location>
        <position position="90"/>
    </location>
    <ligand>
        <name>shikimate</name>
        <dbReference type="ChEBI" id="CHEBI:36208"/>
    </ligand>
</feature>
<feature type="binding site" evidence="1">
    <location>
        <position position="105"/>
    </location>
    <ligand>
        <name>shikimate</name>
        <dbReference type="ChEBI" id="CHEBI:36208"/>
    </ligand>
</feature>
<feature type="binding site" evidence="1">
    <location>
        <begin position="131"/>
        <end position="135"/>
    </location>
    <ligand>
        <name>NADP(+)</name>
        <dbReference type="ChEBI" id="CHEBI:58349"/>
    </ligand>
</feature>
<feature type="binding site" evidence="1">
    <location>
        <begin position="154"/>
        <end position="159"/>
    </location>
    <ligand>
        <name>NADP(+)</name>
        <dbReference type="ChEBI" id="CHEBI:58349"/>
    </ligand>
</feature>
<feature type="binding site" evidence="1">
    <location>
        <position position="219"/>
    </location>
    <ligand>
        <name>NADP(+)</name>
        <dbReference type="ChEBI" id="CHEBI:58349"/>
    </ligand>
</feature>
<feature type="binding site" evidence="1">
    <location>
        <position position="221"/>
    </location>
    <ligand>
        <name>shikimate</name>
        <dbReference type="ChEBI" id="CHEBI:36208"/>
    </ligand>
</feature>
<feature type="binding site" evidence="1">
    <location>
        <position position="242"/>
    </location>
    <ligand>
        <name>NADP(+)</name>
        <dbReference type="ChEBI" id="CHEBI:58349"/>
    </ligand>
</feature>
<reference key="1">
    <citation type="journal article" date="2010" name="J. Bacteriol.">
        <title>Complete genome sequence of the aerobic facultative methanotroph Methylocella silvestris BL2.</title>
        <authorList>
            <person name="Chen Y."/>
            <person name="Crombie A."/>
            <person name="Rahman M.T."/>
            <person name="Dedysh S.N."/>
            <person name="Liesack W."/>
            <person name="Stott M.B."/>
            <person name="Alam M."/>
            <person name="Theisen A.R."/>
            <person name="Murrell J.C."/>
            <person name="Dunfield P.F."/>
        </authorList>
    </citation>
    <scope>NUCLEOTIDE SEQUENCE [LARGE SCALE GENOMIC DNA]</scope>
    <source>
        <strain>DSM 15510 / CIP 108128 / LMG 27833 / NCIMB 13906 / BL2</strain>
    </source>
</reference>
<gene>
    <name evidence="1" type="primary">aroE</name>
    <name type="ordered locus">Msil_2537</name>
</gene>
<name>AROE_METSB</name>
<accession>B8EM72</accession>
<evidence type="ECO:0000255" key="1">
    <source>
        <dbReference type="HAMAP-Rule" id="MF_00222"/>
    </source>
</evidence>
<comment type="function">
    <text evidence="1">Involved in the biosynthesis of the chorismate, which leads to the biosynthesis of aromatic amino acids. Catalyzes the reversible NADPH linked reduction of 3-dehydroshikimate (DHSA) to yield shikimate (SA).</text>
</comment>
<comment type="catalytic activity">
    <reaction evidence="1">
        <text>shikimate + NADP(+) = 3-dehydroshikimate + NADPH + H(+)</text>
        <dbReference type="Rhea" id="RHEA:17737"/>
        <dbReference type="ChEBI" id="CHEBI:15378"/>
        <dbReference type="ChEBI" id="CHEBI:16630"/>
        <dbReference type="ChEBI" id="CHEBI:36208"/>
        <dbReference type="ChEBI" id="CHEBI:57783"/>
        <dbReference type="ChEBI" id="CHEBI:58349"/>
        <dbReference type="EC" id="1.1.1.25"/>
    </reaction>
</comment>
<comment type="pathway">
    <text evidence="1">Metabolic intermediate biosynthesis; chorismate biosynthesis; chorismate from D-erythrose 4-phosphate and phosphoenolpyruvate: step 4/7.</text>
</comment>
<comment type="subunit">
    <text evidence="1">Homodimer.</text>
</comment>
<comment type="similarity">
    <text evidence="1">Belongs to the shikimate dehydrogenase family.</text>
</comment>
<sequence length="280" mass="29881">MNAAAPRAFVVGWPIAHSRSPIIHNYWLHQLGLAGRYEAVAVAPPDFADFAQNLAARGFVGGNVTLPHKQNAFGLVAEATHSARRLEAVNTLWIEDGRLYGDNTDSEGFLCALDEAAPGWEAIPGEAVVLGAGGAARAIVAALIDRGRSVVLANRTRARAEAIAAHFGDAPKVIDWRDLPAALKTAGLLVNTTSLGMKGQPPLDLDVALLPQDAVVHDIVYFPLETALLRAARARGLRVAPGLGMLLHQAAPAFARWFATRPKVTPELRRLVEADIEKAL</sequence>
<keyword id="KW-0028">Amino-acid biosynthesis</keyword>
<keyword id="KW-0057">Aromatic amino acid biosynthesis</keyword>
<keyword id="KW-0521">NADP</keyword>
<keyword id="KW-0560">Oxidoreductase</keyword>
<keyword id="KW-1185">Reference proteome</keyword>